<evidence type="ECO:0000255" key="1">
    <source>
        <dbReference type="HAMAP-Rule" id="MF_00129"/>
    </source>
</evidence>
<sequence length="632" mass="70129">MTHEFTESYDVIVIGAGHAGVEASLATSRMGCKTLLATINLDMLAFMPCNPSIGGSAKGIVVREIDALGGEMGKNIDKTYIQMKMLNTGKGPAVRALRAQADKSLYAREMKHTVEKQANLTLRQTMIDDILVEDGRVVGVLTATGQKFAAKAVVVTTGTALRGEIILGELKYSSGPNNSLASVTLADNLKKLGLEIGRFKTGTPPRVKASSINYDQTEIQPGDDKPNHFSFMSKDADYLKDQIPCWLTYTNQTSHDIINQNLYRAPMFSGIVKGVGPRYCPSIEDKIVRFADKERHQLFLEPEGRDTEEVYVQGLSTSLPEDVQKDLIHSIKGLEKAEMMRTGYAIEYDIVLPHQLRATLETKLISGLFTAGQTNGTSGYEEAAGQGLIAGINAALKVQGKSELILKRSDAYIGVMIDDLVTKGTLEPYRLLTSRAEYRLILRHDNADMRLTEIGRDIGLVDDERWKAFEIKKNQFDNELKRLNSIKLKPVKATNDRVQELGFKPLTDAMTAKEFMRRPEIDYAIAVSFVGPAAEDLDAKIIELLETEIKYEGYIRKALDQVAKMKRMEEKRIPANIDWDAIDSIATEARQKFKKINPETIGQASRISGVNPADISILMIYLEGNGKAHRKY</sequence>
<protein>
    <recommendedName>
        <fullName evidence="1">tRNA uridine 5-carboxymethylaminomethyl modification enzyme MnmG</fullName>
    </recommendedName>
    <alternativeName>
        <fullName evidence="1">Glucose-inhibited division protein A</fullName>
    </alternativeName>
</protein>
<proteinExistence type="inferred from homology"/>
<name>MNMG_STRP3</name>
<comment type="function">
    <text evidence="1">NAD-binding protein involved in the addition of a carboxymethylaminomethyl (cmnm) group at the wobble position (U34) of certain tRNAs, forming tRNA-cmnm(5)s(2)U34.</text>
</comment>
<comment type="cofactor">
    <cofactor evidence="1">
        <name>FAD</name>
        <dbReference type="ChEBI" id="CHEBI:57692"/>
    </cofactor>
</comment>
<comment type="subunit">
    <text evidence="1">Homodimer. Heterotetramer of two MnmE and two MnmG subunits.</text>
</comment>
<comment type="subcellular location">
    <subcellularLocation>
        <location evidence="1">Cytoplasm</location>
    </subcellularLocation>
</comment>
<comment type="similarity">
    <text evidence="1">Belongs to the MnmG family.</text>
</comment>
<reference key="1">
    <citation type="journal article" date="2002" name="Proc. Natl. Acad. Sci. U.S.A.">
        <title>Genome sequence of a serotype M3 strain of group A Streptococcus: phage-encoded toxins, the high-virulence phenotype, and clone emergence.</title>
        <authorList>
            <person name="Beres S.B."/>
            <person name="Sylva G.L."/>
            <person name="Barbian K.D."/>
            <person name="Lei B."/>
            <person name="Hoff J.S."/>
            <person name="Mammarella N.D."/>
            <person name="Liu M.-Y."/>
            <person name="Smoot J.C."/>
            <person name="Porcella S.F."/>
            <person name="Parkins L.D."/>
            <person name="Campbell D.S."/>
            <person name="Smith T.M."/>
            <person name="McCormick J.K."/>
            <person name="Leung D.Y.M."/>
            <person name="Schlievert P.M."/>
            <person name="Musser J.M."/>
        </authorList>
    </citation>
    <scope>NUCLEOTIDE SEQUENCE [LARGE SCALE GENOMIC DNA]</scope>
    <source>
        <strain>ATCC BAA-595 / MGAS315</strain>
    </source>
</reference>
<keyword id="KW-0963">Cytoplasm</keyword>
<keyword id="KW-0274">FAD</keyword>
<keyword id="KW-0285">Flavoprotein</keyword>
<keyword id="KW-0520">NAD</keyword>
<keyword id="KW-0819">tRNA processing</keyword>
<dbReference type="EMBL" id="AE014074">
    <property type="protein sequence ID" value="AAM80445.1"/>
    <property type="molecule type" value="Genomic_DNA"/>
</dbReference>
<dbReference type="RefSeq" id="WP_011055105.1">
    <property type="nucleotide sequence ID" value="NC_004070.1"/>
</dbReference>
<dbReference type="SMR" id="P0DB34"/>
<dbReference type="KEGG" id="spg:SpyM3_1838"/>
<dbReference type="HOGENOM" id="CLU_007831_2_2_9"/>
<dbReference type="Proteomes" id="UP000000564">
    <property type="component" value="Chromosome"/>
</dbReference>
<dbReference type="GO" id="GO:0005829">
    <property type="term" value="C:cytosol"/>
    <property type="evidence" value="ECO:0007669"/>
    <property type="project" value="TreeGrafter"/>
</dbReference>
<dbReference type="GO" id="GO:0050660">
    <property type="term" value="F:flavin adenine dinucleotide binding"/>
    <property type="evidence" value="ECO:0007669"/>
    <property type="project" value="UniProtKB-UniRule"/>
</dbReference>
<dbReference type="GO" id="GO:0030488">
    <property type="term" value="P:tRNA methylation"/>
    <property type="evidence" value="ECO:0007669"/>
    <property type="project" value="TreeGrafter"/>
</dbReference>
<dbReference type="GO" id="GO:0002098">
    <property type="term" value="P:tRNA wobble uridine modification"/>
    <property type="evidence" value="ECO:0007669"/>
    <property type="project" value="InterPro"/>
</dbReference>
<dbReference type="FunFam" id="1.10.10.1800:FF:000001">
    <property type="entry name" value="tRNA uridine 5-carboxymethylaminomethyl modification enzyme MnmG"/>
    <property type="match status" value="1"/>
</dbReference>
<dbReference type="FunFam" id="1.10.150.570:FF:000001">
    <property type="entry name" value="tRNA uridine 5-carboxymethylaminomethyl modification enzyme MnmG"/>
    <property type="match status" value="1"/>
</dbReference>
<dbReference type="FunFam" id="3.50.50.60:FF:000002">
    <property type="entry name" value="tRNA uridine 5-carboxymethylaminomethyl modification enzyme MnmG"/>
    <property type="match status" value="1"/>
</dbReference>
<dbReference type="FunFam" id="3.50.50.60:FF:000063">
    <property type="entry name" value="tRNA uridine 5-carboxymethylaminomethyl modification enzyme MnmG"/>
    <property type="match status" value="1"/>
</dbReference>
<dbReference type="Gene3D" id="3.50.50.60">
    <property type="entry name" value="FAD/NAD(P)-binding domain"/>
    <property type="match status" value="2"/>
</dbReference>
<dbReference type="Gene3D" id="1.10.150.570">
    <property type="entry name" value="GidA associated domain, C-terminal subdomain"/>
    <property type="match status" value="1"/>
</dbReference>
<dbReference type="Gene3D" id="1.10.10.1800">
    <property type="entry name" value="tRNA uridine 5-carboxymethylaminomethyl modification enzyme MnmG/GidA"/>
    <property type="match status" value="1"/>
</dbReference>
<dbReference type="HAMAP" id="MF_00129">
    <property type="entry name" value="MnmG_GidA"/>
    <property type="match status" value="1"/>
</dbReference>
<dbReference type="InterPro" id="IPR036188">
    <property type="entry name" value="FAD/NAD-bd_sf"/>
</dbReference>
<dbReference type="InterPro" id="IPR049312">
    <property type="entry name" value="GIDA_C_N"/>
</dbReference>
<dbReference type="InterPro" id="IPR004416">
    <property type="entry name" value="MnmG"/>
</dbReference>
<dbReference type="InterPro" id="IPR002218">
    <property type="entry name" value="MnmG-rel"/>
</dbReference>
<dbReference type="InterPro" id="IPR020595">
    <property type="entry name" value="MnmG-rel_CS"/>
</dbReference>
<dbReference type="InterPro" id="IPR026904">
    <property type="entry name" value="MnmG_C"/>
</dbReference>
<dbReference type="InterPro" id="IPR047001">
    <property type="entry name" value="MnmG_C_subdom"/>
</dbReference>
<dbReference type="InterPro" id="IPR044920">
    <property type="entry name" value="MnmG_C_subdom_sf"/>
</dbReference>
<dbReference type="InterPro" id="IPR040131">
    <property type="entry name" value="MnmG_N"/>
</dbReference>
<dbReference type="NCBIfam" id="TIGR00136">
    <property type="entry name" value="mnmG_gidA"/>
    <property type="match status" value="1"/>
</dbReference>
<dbReference type="PANTHER" id="PTHR11806">
    <property type="entry name" value="GLUCOSE INHIBITED DIVISION PROTEIN A"/>
    <property type="match status" value="1"/>
</dbReference>
<dbReference type="PANTHER" id="PTHR11806:SF0">
    <property type="entry name" value="PROTEIN MTO1 HOMOLOG, MITOCHONDRIAL"/>
    <property type="match status" value="1"/>
</dbReference>
<dbReference type="Pfam" id="PF01134">
    <property type="entry name" value="GIDA"/>
    <property type="match status" value="1"/>
</dbReference>
<dbReference type="Pfam" id="PF21680">
    <property type="entry name" value="GIDA_C_1st"/>
    <property type="match status" value="1"/>
</dbReference>
<dbReference type="Pfam" id="PF13932">
    <property type="entry name" value="SAM_GIDA_C"/>
    <property type="match status" value="1"/>
</dbReference>
<dbReference type="PRINTS" id="PR00411">
    <property type="entry name" value="PNDRDTASEI"/>
</dbReference>
<dbReference type="SMART" id="SM01228">
    <property type="entry name" value="GIDA_assoc_3"/>
    <property type="match status" value="1"/>
</dbReference>
<dbReference type="SUPFAM" id="SSF51905">
    <property type="entry name" value="FAD/NAD(P)-binding domain"/>
    <property type="match status" value="1"/>
</dbReference>
<dbReference type="PROSITE" id="PS01280">
    <property type="entry name" value="GIDA_1"/>
    <property type="match status" value="1"/>
</dbReference>
<dbReference type="PROSITE" id="PS01281">
    <property type="entry name" value="GIDA_2"/>
    <property type="match status" value="1"/>
</dbReference>
<accession>P0DB34</accession>
<accession>Q8K5H7</accession>
<feature type="chain" id="PRO_0000117191" description="tRNA uridine 5-carboxymethylaminomethyl modification enzyme MnmG">
    <location>
        <begin position="1"/>
        <end position="632"/>
    </location>
</feature>
<feature type="binding site" evidence="1">
    <location>
        <begin position="15"/>
        <end position="20"/>
    </location>
    <ligand>
        <name>FAD</name>
        <dbReference type="ChEBI" id="CHEBI:57692"/>
    </ligand>
</feature>
<feature type="binding site" evidence="1">
    <location>
        <position position="127"/>
    </location>
    <ligand>
        <name>FAD</name>
        <dbReference type="ChEBI" id="CHEBI:57692"/>
    </ligand>
</feature>
<feature type="binding site" evidence="1">
    <location>
        <position position="182"/>
    </location>
    <ligand>
        <name>FAD</name>
        <dbReference type="ChEBI" id="CHEBI:57692"/>
    </ligand>
</feature>
<feature type="binding site" evidence="1">
    <location>
        <begin position="276"/>
        <end position="290"/>
    </location>
    <ligand>
        <name>NAD(+)</name>
        <dbReference type="ChEBI" id="CHEBI:57540"/>
    </ligand>
</feature>
<feature type="binding site" evidence="1">
    <location>
        <position position="373"/>
    </location>
    <ligand>
        <name>FAD</name>
        <dbReference type="ChEBI" id="CHEBI:57692"/>
    </ligand>
</feature>
<organism>
    <name type="scientific">Streptococcus pyogenes serotype M3 (strain ATCC BAA-595 / MGAS315)</name>
    <dbReference type="NCBI Taxonomy" id="198466"/>
    <lineage>
        <taxon>Bacteria</taxon>
        <taxon>Bacillati</taxon>
        <taxon>Bacillota</taxon>
        <taxon>Bacilli</taxon>
        <taxon>Lactobacillales</taxon>
        <taxon>Streptococcaceae</taxon>
        <taxon>Streptococcus</taxon>
    </lineage>
</organism>
<gene>
    <name evidence="1" type="primary">mnmG</name>
    <name evidence="1" type="synonym">gidA</name>
    <name type="ordered locus">SpyM3_1838</name>
</gene>